<sequence>MSEELQPVFSIERLYVKDLSLEVPHAPQIFLEQGEPEVDMRVSTGSQKLEDGYYNVDVTVTVTAKLDNERTMFLNEVTQSGIFRLENIPEEDVQLLLGVACPNILFPYAREAVSGTVTRAGFPPVLLAPINFEAIYQQQQEAEAAGA</sequence>
<evidence type="ECO:0000255" key="1">
    <source>
        <dbReference type="HAMAP-Rule" id="MF_00821"/>
    </source>
</evidence>
<comment type="function">
    <text evidence="1">One of the proteins required for the normal export of preproteins out of the cell cytoplasm. It is a molecular chaperone that binds to a subset of precursor proteins, maintaining them in a translocation-competent state. It also specifically binds to its receptor SecA.</text>
</comment>
<comment type="subunit">
    <text evidence="1">Homotetramer, a dimer of dimers. One homotetramer interacts with 1 SecA dimer.</text>
</comment>
<comment type="subcellular location">
    <subcellularLocation>
        <location evidence="1">Cytoplasm</location>
    </subcellularLocation>
</comment>
<comment type="similarity">
    <text evidence="1">Belongs to the SecB family.</text>
</comment>
<name>SECB_NEIMF</name>
<accession>A1KSA7</accession>
<dbReference type="EMBL" id="AM421808">
    <property type="protein sequence ID" value="CAM09737.1"/>
    <property type="molecule type" value="Genomic_DNA"/>
</dbReference>
<dbReference type="RefSeq" id="WP_002214461.1">
    <property type="nucleotide sequence ID" value="NC_008767.1"/>
</dbReference>
<dbReference type="SMR" id="A1KSA7"/>
<dbReference type="KEGG" id="nmc:NMC0432"/>
<dbReference type="HOGENOM" id="CLU_111574_1_0_4"/>
<dbReference type="Proteomes" id="UP000002286">
    <property type="component" value="Chromosome"/>
</dbReference>
<dbReference type="GO" id="GO:0005737">
    <property type="term" value="C:cytoplasm"/>
    <property type="evidence" value="ECO:0007669"/>
    <property type="project" value="UniProtKB-SubCell"/>
</dbReference>
<dbReference type="GO" id="GO:0051082">
    <property type="term" value="F:unfolded protein binding"/>
    <property type="evidence" value="ECO:0007669"/>
    <property type="project" value="InterPro"/>
</dbReference>
<dbReference type="GO" id="GO:0006457">
    <property type="term" value="P:protein folding"/>
    <property type="evidence" value="ECO:0007669"/>
    <property type="project" value="UniProtKB-UniRule"/>
</dbReference>
<dbReference type="GO" id="GO:0051262">
    <property type="term" value="P:protein tetramerization"/>
    <property type="evidence" value="ECO:0007669"/>
    <property type="project" value="InterPro"/>
</dbReference>
<dbReference type="GO" id="GO:0015031">
    <property type="term" value="P:protein transport"/>
    <property type="evidence" value="ECO:0007669"/>
    <property type="project" value="UniProtKB-UniRule"/>
</dbReference>
<dbReference type="Gene3D" id="3.10.420.10">
    <property type="entry name" value="SecB-like"/>
    <property type="match status" value="1"/>
</dbReference>
<dbReference type="HAMAP" id="MF_00821">
    <property type="entry name" value="SecB"/>
    <property type="match status" value="1"/>
</dbReference>
<dbReference type="InterPro" id="IPR003708">
    <property type="entry name" value="SecB"/>
</dbReference>
<dbReference type="InterPro" id="IPR035958">
    <property type="entry name" value="SecB-like_sf"/>
</dbReference>
<dbReference type="NCBIfam" id="NF004394">
    <property type="entry name" value="PRK05751.1-5"/>
    <property type="match status" value="1"/>
</dbReference>
<dbReference type="NCBIfam" id="TIGR00809">
    <property type="entry name" value="secB"/>
    <property type="match status" value="1"/>
</dbReference>
<dbReference type="PANTHER" id="PTHR36918">
    <property type="match status" value="1"/>
</dbReference>
<dbReference type="PANTHER" id="PTHR36918:SF1">
    <property type="entry name" value="PROTEIN-EXPORT PROTEIN SECB"/>
    <property type="match status" value="1"/>
</dbReference>
<dbReference type="Pfam" id="PF02556">
    <property type="entry name" value="SecB"/>
    <property type="match status" value="1"/>
</dbReference>
<dbReference type="PRINTS" id="PR01594">
    <property type="entry name" value="SECBCHAPRONE"/>
</dbReference>
<dbReference type="SUPFAM" id="SSF54611">
    <property type="entry name" value="SecB-like"/>
    <property type="match status" value="1"/>
</dbReference>
<proteinExistence type="inferred from homology"/>
<organism>
    <name type="scientific">Neisseria meningitidis serogroup C / serotype 2a (strain ATCC 700532 / DSM 15464 / FAM18)</name>
    <dbReference type="NCBI Taxonomy" id="272831"/>
    <lineage>
        <taxon>Bacteria</taxon>
        <taxon>Pseudomonadati</taxon>
        <taxon>Pseudomonadota</taxon>
        <taxon>Betaproteobacteria</taxon>
        <taxon>Neisseriales</taxon>
        <taxon>Neisseriaceae</taxon>
        <taxon>Neisseria</taxon>
    </lineage>
</organism>
<reference key="1">
    <citation type="journal article" date="2007" name="PLoS Genet.">
        <title>Meningococcal genetic variation mechanisms viewed through comparative analysis of serogroup C strain FAM18.</title>
        <authorList>
            <person name="Bentley S.D."/>
            <person name="Vernikos G.S."/>
            <person name="Snyder L.A.S."/>
            <person name="Churcher C."/>
            <person name="Arrowsmith C."/>
            <person name="Chillingworth T."/>
            <person name="Cronin A."/>
            <person name="Davis P.H."/>
            <person name="Holroyd N.E."/>
            <person name="Jagels K."/>
            <person name="Maddison M."/>
            <person name="Moule S."/>
            <person name="Rabbinowitsch E."/>
            <person name="Sharp S."/>
            <person name="Unwin L."/>
            <person name="Whitehead S."/>
            <person name="Quail M.A."/>
            <person name="Achtman M."/>
            <person name="Barrell B.G."/>
            <person name="Saunders N.J."/>
            <person name="Parkhill J."/>
        </authorList>
    </citation>
    <scope>NUCLEOTIDE SEQUENCE [LARGE SCALE GENOMIC DNA]</scope>
    <source>
        <strain>ATCC 700532 / DSM 15464 / FAM18</strain>
    </source>
</reference>
<protein>
    <recommendedName>
        <fullName evidence="1">Protein-export protein SecB</fullName>
    </recommendedName>
</protein>
<feature type="chain" id="PRO_1000062485" description="Protein-export protein SecB">
    <location>
        <begin position="1"/>
        <end position="147"/>
    </location>
</feature>
<gene>
    <name evidence="1" type="primary">secB</name>
    <name type="ordered locus">NMC0432</name>
</gene>
<keyword id="KW-0143">Chaperone</keyword>
<keyword id="KW-0963">Cytoplasm</keyword>
<keyword id="KW-0653">Protein transport</keyword>
<keyword id="KW-0811">Translocation</keyword>
<keyword id="KW-0813">Transport</keyword>